<organism>
    <name type="scientific">Rattus norvegicus</name>
    <name type="common">Rat</name>
    <dbReference type="NCBI Taxonomy" id="10116"/>
    <lineage>
        <taxon>Eukaryota</taxon>
        <taxon>Metazoa</taxon>
        <taxon>Chordata</taxon>
        <taxon>Craniata</taxon>
        <taxon>Vertebrata</taxon>
        <taxon>Euteleostomi</taxon>
        <taxon>Mammalia</taxon>
        <taxon>Eutheria</taxon>
        <taxon>Euarchontoglires</taxon>
        <taxon>Glires</taxon>
        <taxon>Rodentia</taxon>
        <taxon>Myomorpha</taxon>
        <taxon>Muroidea</taxon>
        <taxon>Muridae</taxon>
        <taxon>Murinae</taxon>
        <taxon>Rattus</taxon>
    </lineage>
</organism>
<comment type="function">
    <text evidence="7 8 9">Voltage-sensitive calcium channels (VSCC) mediate the entry of calcium ions into excitable cells and are also involved in a variety of calcium-dependent processes, including muscle contraction, hormone or neurotransmitter release, gene expression, cell motility, cell division and cell death. This alpha-1B subunit gives rise to N-type calcium currents. N-type calcium channels belong to the 'high-voltage activated' (HVA) group. They are involved in pain signaling. Calcium channels containing alpha-1B subunit may play a role in directed migration of immature neurons. Mediates Ca(2+) release probability at hippocampal neuronal soma and synaptic terminals.</text>
</comment>
<comment type="catalytic activity">
    <reaction evidence="7 8 9">
        <text>Ca(2+)(in) = Ca(2+)(out)</text>
        <dbReference type="Rhea" id="RHEA:29671"/>
        <dbReference type="ChEBI" id="CHEBI:29108"/>
    </reaction>
</comment>
<comment type="activity regulation">
    <text evidence="3 7 12">Is specifically blocked by omega-conotoxin GVIA (Probable) (PubMed:10938268). Is specifically blocked by omega-conotoxin MVIIA (ziconotide) (By similarity). Is insensitive to dihydropyridines (DHP).</text>
</comment>
<comment type="subunit">
    <text evidence="1">Multisubunit complex consisting of alpha-1, alpha-2, beta and delta subunits in a 1:1:1:1 ratio. The channel activity is directed by the pore-forming and voltage-sensitive alpha-1 subunit. In many cases, this subunit is sufficient to generate voltage-sensitive calcium channel activity. The auxiliary subunits beta and alpha-2/delta linked by a disulfide bridge regulate the channel activity. Interacts with RIMS1. Interacts with FMR1 (via C-terminus); this interaction induces a decrease in the number of presynaptic functional CACNA1B channels at the cell surface.</text>
</comment>
<comment type="interaction">
    <interactant intactId="EBI-540038">
        <id>Q02294</id>
    </interactant>
    <interactant intactId="EBI-458098">
        <id>P21707</id>
        <label>Syt1</label>
    </interactant>
    <organismsDiffer>false</organismsDiffer>
    <experiments>2</experiments>
</comment>
<comment type="subcellular location">
    <subcellularLocation>
        <location evidence="3">Membrane</location>
        <topology evidence="4">Multi-pass membrane protein</topology>
    </subcellularLocation>
</comment>
<comment type="alternative products">
    <event type="alternative splicing"/>
    <isoform>
        <id>Q02294-1</id>
        <name>1</name>
        <sequence type="displayed"/>
    </isoform>
    <text>2 isoforms may be produced.</text>
</comment>
<comment type="tissue specificity">
    <text>Central nervous system.</text>
</comment>
<comment type="domain">
    <text>Each of the four internal repeats contains five hydrophobic transmembrane segments (S1, S2, S3, S5, S6) and one positively charged transmembrane segment (S4). S4 segments probably represent the voltage-sensor and are characterized by a series of positively charged amino acids at every third position.</text>
</comment>
<comment type="PTM">
    <text evidence="10">Phosphorylated in vitro by CaM-kinase II, PKA, PKC and CGPK.</text>
</comment>
<comment type="similarity">
    <text evidence="11">Belongs to the calcium channel alpha-1 subunit (TC 1.A.1.11) family. CACNA1B subfamily.</text>
</comment>
<protein>
    <recommendedName>
        <fullName>Voltage-dependent N-type calcium channel subunit alpha-1B</fullName>
    </recommendedName>
    <alternativeName>
        <fullName>Brain calcium channel III</fullName>
        <shortName>BIII</shortName>
    </alternativeName>
    <alternativeName>
        <fullName>Calcium channel, L type, alpha-1 polypeptide isoform 5</fullName>
    </alternativeName>
    <alternativeName>
        <fullName>Voltage-gated calcium channel subunit alpha Cav2.2</fullName>
    </alternativeName>
</protein>
<keyword id="KW-0002">3D-structure</keyword>
<keyword id="KW-0025">Alternative splicing</keyword>
<keyword id="KW-0067">ATP-binding</keyword>
<keyword id="KW-0106">Calcium</keyword>
<keyword id="KW-0107">Calcium channel</keyword>
<keyword id="KW-0109">Calcium transport</keyword>
<keyword id="KW-1015">Disulfide bond</keyword>
<keyword id="KW-0325">Glycoprotein</keyword>
<keyword id="KW-0407">Ion channel</keyword>
<keyword id="KW-0406">Ion transport</keyword>
<keyword id="KW-0472">Membrane</keyword>
<keyword id="KW-0479">Metal-binding</keyword>
<keyword id="KW-0488">Methylation</keyword>
<keyword id="KW-0547">Nucleotide-binding</keyword>
<keyword id="KW-0597">Phosphoprotein</keyword>
<keyword id="KW-1185">Reference proteome</keyword>
<keyword id="KW-0677">Repeat</keyword>
<keyword id="KW-0812">Transmembrane</keyword>
<keyword id="KW-1133">Transmembrane helix</keyword>
<keyword id="KW-0813">Transport</keyword>
<keyword id="KW-0851">Voltage-gated channel</keyword>
<accession>Q02294</accession>
<reference key="1">
    <citation type="journal article" date="1992" name="Proc. Natl. Acad. Sci. U.S.A.">
        <title>Molecular cloning of the alpha-1 subunit of an omega-conotoxin-sensitive calcium channel.</title>
        <authorList>
            <person name="Dubel S.J."/>
            <person name="Starr T.V.B."/>
            <person name="Hell J.W."/>
            <person name="Ahlijanian M.K."/>
            <person name="Enyeart J.J."/>
            <person name="Catterall W.A."/>
            <person name="Snutch T.P."/>
        </authorList>
    </citation>
    <scope>NUCLEOTIDE SEQUENCE [MRNA]</scope>
    <scope>FUNCTION</scope>
    <scope>ACTIVITY REGULATION</scope>
    <scope>TRANSPORTER ACTIVITY</scope>
    <source>
        <strain>Sprague-Dawley</strain>
        <tissue>Brain</tissue>
    </source>
</reference>
<reference key="2">
    <citation type="journal article" date="1990" name="Proc. Natl. Acad. Sci. U.S.A.">
        <title>Rat brain expresses a heterogeneous family of calcium channels.</title>
        <authorList>
            <person name="Snutch T.P."/>
            <person name="Leonard J.P."/>
            <person name="Gilbert M.M."/>
            <person name="Lester H.A."/>
            <person name="Davidson N."/>
        </authorList>
    </citation>
    <scope>NUCLEOTIDE SEQUENCE [MRNA] OF 1516-1679 (CLONE RBB-10)</scope>
</reference>
<reference key="3">
    <citation type="journal article" date="1994" name="J. Biol. Chem.">
        <title>Differential phosphorylation of two size forms of the N-type calcium channel alpha 1 subunit which have different COOH termini.</title>
        <authorList>
            <person name="Hell J.W."/>
            <person name="Appleyard S.M."/>
            <person name="Yokoyama C.T."/>
            <person name="Warner C."/>
            <person name="Catterall W.A."/>
        </authorList>
    </citation>
    <scope>PHOSPHORYLATION</scope>
</reference>
<reference key="4">
    <citation type="journal article" date="1994" name="Nature">
        <title>Calcium channel beta-subunit binds to a conserved motif in the I-II cytoplasmic linker of the alpha 1-subunit.</title>
        <authorList>
            <person name="Pragnell M."/>
            <person name="de Waard M."/>
            <person name="Mori Y."/>
            <person name="Tanabe T."/>
            <person name="Snutch T.P."/>
            <person name="Campbell K.P."/>
        </authorList>
    </citation>
    <scope>BETA-SUBUNIT BINDING DOMAIN</scope>
</reference>
<reference key="5">
    <citation type="journal article" date="2000" name="J. Biol. Chem.">
        <title>Novel omega-conotoxins from Conus catus discriminate among neuronal calcium channel subtypes.</title>
        <authorList>
            <person name="Lewis R.J."/>
            <person name="Nielsen K.J."/>
            <person name="Craik D.J."/>
            <person name="Loughnan M.L."/>
            <person name="Adams D.A."/>
            <person name="Sharpe I.A."/>
            <person name="Luchian T."/>
            <person name="Adams D.J."/>
            <person name="Bond T."/>
            <person name="Thomas L."/>
            <person name="Jones A."/>
            <person name="Matheson J.-L."/>
            <person name="Drinkwater R."/>
            <person name="Andrews P.R."/>
            <person name="Alewood P.F."/>
        </authorList>
    </citation>
    <scope>ACTIVITY REGULATION</scope>
    <scope>FUNCTION</scope>
    <scope>TRANSPORTER ACTIVITY</scope>
</reference>
<reference key="6">
    <citation type="journal article" date="2012" name="Nat. Commun.">
        <title>Quantitative maps of protein phosphorylation sites across 14 different rat organs and tissues.</title>
        <authorList>
            <person name="Lundby A."/>
            <person name="Secher A."/>
            <person name="Lage K."/>
            <person name="Nordsborg N.B."/>
            <person name="Dmytriyev A."/>
            <person name="Lundby C."/>
            <person name="Olsen J.V."/>
        </authorList>
    </citation>
    <scope>PHOSPHORYLATION [LARGE SCALE ANALYSIS] AT SER-411; SER-746 AND SER-2253</scope>
    <scope>IDENTIFICATION BY MASS SPECTROMETRY [LARGE SCALE ANALYSIS]</scope>
</reference>
<reference key="7">
    <citation type="journal article" date="2013" name="J. Neurosci.">
        <title>Balance of calcineurin Aalpha and CDK5 activities sets release probability at nerve terminals.</title>
        <authorList>
            <person name="Kim S.H."/>
            <person name="Ryan T.A."/>
        </authorList>
    </citation>
    <scope>FUNCTION</scope>
    <scope>TRANSPORTER ACTIVITY</scope>
</reference>
<name>CAC1B_RAT</name>
<dbReference type="EMBL" id="M92905">
    <property type="protein sequence ID" value="AAA42014.1"/>
    <property type="molecule type" value="mRNA"/>
</dbReference>
<dbReference type="PIR" id="B35901">
    <property type="entry name" value="B35901"/>
</dbReference>
<dbReference type="PDB" id="4DEX">
    <property type="method" value="X-ray"/>
    <property type="resolution" value="2.00 A"/>
    <property type="chains" value="B=358-468"/>
</dbReference>
<dbReference type="PDBsum" id="4DEX"/>
<dbReference type="SMR" id="Q02294"/>
<dbReference type="CORUM" id="Q02294"/>
<dbReference type="FunCoup" id="Q02294">
    <property type="interactions" value="1048"/>
</dbReference>
<dbReference type="IntAct" id="Q02294">
    <property type="interactions" value="4"/>
</dbReference>
<dbReference type="MINT" id="Q02294"/>
<dbReference type="STRING" id="10116.ENSRNOP00000006162"/>
<dbReference type="BindingDB" id="Q02294"/>
<dbReference type="ChEMBL" id="CHEMBL5107"/>
<dbReference type="DrugCentral" id="Q02294"/>
<dbReference type="GuidetoPHARMACOLOGY" id="533"/>
<dbReference type="GlyCosmos" id="Q02294">
    <property type="glycosylation" value="3 sites, No reported glycans"/>
</dbReference>
<dbReference type="GlyGen" id="Q02294">
    <property type="glycosylation" value="6 sites"/>
</dbReference>
<dbReference type="iPTMnet" id="Q02294"/>
<dbReference type="PhosphoSitePlus" id="Q02294"/>
<dbReference type="PaxDb" id="10116-ENSRNOP00000006162"/>
<dbReference type="UCSC" id="RGD:628852">
    <molecule id="Q02294-1"/>
    <property type="organism name" value="rat"/>
</dbReference>
<dbReference type="AGR" id="RGD:628852"/>
<dbReference type="RGD" id="628852">
    <property type="gene designation" value="Cacna1b"/>
</dbReference>
<dbReference type="eggNOG" id="KOG2301">
    <property type="taxonomic scope" value="Eukaryota"/>
</dbReference>
<dbReference type="InParanoid" id="Q02294"/>
<dbReference type="PhylomeDB" id="Q02294"/>
<dbReference type="Reactome" id="R-RNO-112308">
    <property type="pathway name" value="Presynaptic depolarization and calcium channel opening"/>
</dbReference>
<dbReference type="EvolutionaryTrace" id="Q02294"/>
<dbReference type="PRO" id="PR:Q02294"/>
<dbReference type="Proteomes" id="UP000002494">
    <property type="component" value="Unplaced"/>
</dbReference>
<dbReference type="GO" id="GO:0043679">
    <property type="term" value="C:axon terminus"/>
    <property type="evidence" value="ECO:0000314"/>
    <property type="project" value="RGD"/>
</dbReference>
<dbReference type="GO" id="GO:0030425">
    <property type="term" value="C:dendrite"/>
    <property type="evidence" value="ECO:0000266"/>
    <property type="project" value="RGD"/>
</dbReference>
<dbReference type="GO" id="GO:0043198">
    <property type="term" value="C:dendritic shaft"/>
    <property type="evidence" value="ECO:0000314"/>
    <property type="project" value="RGD"/>
</dbReference>
<dbReference type="GO" id="GO:0098978">
    <property type="term" value="C:glutamatergic synapse"/>
    <property type="evidence" value="ECO:0000314"/>
    <property type="project" value="SynGO"/>
</dbReference>
<dbReference type="GO" id="GO:0016020">
    <property type="term" value="C:membrane"/>
    <property type="evidence" value="ECO:0000266"/>
    <property type="project" value="RGD"/>
</dbReference>
<dbReference type="GO" id="GO:0043025">
    <property type="term" value="C:neuronal cell body"/>
    <property type="evidence" value="ECO:0000314"/>
    <property type="project" value="RGD"/>
</dbReference>
<dbReference type="GO" id="GO:0048786">
    <property type="term" value="C:presynaptic active zone"/>
    <property type="evidence" value="ECO:0000266"/>
    <property type="project" value="RGD"/>
</dbReference>
<dbReference type="GO" id="GO:0032991">
    <property type="term" value="C:protein-containing complex"/>
    <property type="evidence" value="ECO:0000314"/>
    <property type="project" value="RGD"/>
</dbReference>
<dbReference type="GO" id="GO:0098685">
    <property type="term" value="C:Schaffer collateral - CA1 synapse"/>
    <property type="evidence" value="ECO:0000314"/>
    <property type="project" value="SynGO"/>
</dbReference>
<dbReference type="GO" id="GO:0005891">
    <property type="term" value="C:voltage-gated calcium channel complex"/>
    <property type="evidence" value="ECO:0000266"/>
    <property type="project" value="RGD"/>
</dbReference>
<dbReference type="GO" id="GO:0005524">
    <property type="term" value="F:ATP binding"/>
    <property type="evidence" value="ECO:0007669"/>
    <property type="project" value="UniProtKB-KW"/>
</dbReference>
<dbReference type="GO" id="GO:0005509">
    <property type="term" value="F:calcium ion binding"/>
    <property type="evidence" value="ECO:0007669"/>
    <property type="project" value="InterPro"/>
</dbReference>
<dbReference type="GO" id="GO:0008331">
    <property type="term" value="F:high voltage-gated calcium channel activity"/>
    <property type="evidence" value="ECO:0000314"/>
    <property type="project" value="RGD"/>
</dbReference>
<dbReference type="GO" id="GO:0051721">
    <property type="term" value="F:protein phosphatase 2A binding"/>
    <property type="evidence" value="ECO:0000353"/>
    <property type="project" value="RGD"/>
</dbReference>
<dbReference type="GO" id="GO:0005245">
    <property type="term" value="F:voltage-gated calcium channel activity"/>
    <property type="evidence" value="ECO:0000314"/>
    <property type="project" value="UniProtKB"/>
</dbReference>
<dbReference type="GO" id="GO:0099626">
    <property type="term" value="F:voltage-gated calcium channel activity involved in regulation of presynaptic cytosolic calcium levels"/>
    <property type="evidence" value="ECO:0000314"/>
    <property type="project" value="SynGO"/>
</dbReference>
<dbReference type="GO" id="GO:0070509">
    <property type="term" value="P:calcium ion import"/>
    <property type="evidence" value="ECO:0000315"/>
    <property type="project" value="RGD"/>
</dbReference>
<dbReference type="GO" id="GO:0098703">
    <property type="term" value="P:calcium ion import across plasma membrane"/>
    <property type="evidence" value="ECO:0000318"/>
    <property type="project" value="GO_Central"/>
</dbReference>
<dbReference type="GO" id="GO:0070588">
    <property type="term" value="P:calcium ion transmembrane transport"/>
    <property type="evidence" value="ECO:0000266"/>
    <property type="project" value="RGD"/>
</dbReference>
<dbReference type="GO" id="GO:0006816">
    <property type="term" value="P:calcium ion transport"/>
    <property type="evidence" value="ECO:0000315"/>
    <property type="project" value="RGD"/>
</dbReference>
<dbReference type="GO" id="GO:0051649">
    <property type="term" value="P:establishment of localization in cell"/>
    <property type="evidence" value="ECO:0000266"/>
    <property type="project" value="RGD"/>
</dbReference>
<dbReference type="GO" id="GO:0007626">
    <property type="term" value="P:locomotory behavior"/>
    <property type="evidence" value="ECO:0000266"/>
    <property type="project" value="RGD"/>
</dbReference>
<dbReference type="GO" id="GO:0050804">
    <property type="term" value="P:modulation of chemical synaptic transmission"/>
    <property type="evidence" value="ECO:0000266"/>
    <property type="project" value="RGD"/>
</dbReference>
<dbReference type="GO" id="GO:0007269">
    <property type="term" value="P:neurotransmitter secretion"/>
    <property type="evidence" value="ECO:0000266"/>
    <property type="project" value="RGD"/>
</dbReference>
<dbReference type="GO" id="GO:0021554">
    <property type="term" value="P:optic nerve development"/>
    <property type="evidence" value="ECO:0000270"/>
    <property type="project" value="RGD"/>
</dbReference>
<dbReference type="GO" id="GO:1903235">
    <property type="term" value="P:positive regulation of calcium ion-dependent exocytosis of neurotransmitter"/>
    <property type="evidence" value="ECO:0000315"/>
    <property type="project" value="ARUK-UCL"/>
</dbReference>
<dbReference type="GO" id="GO:0001956">
    <property type="term" value="P:positive regulation of neurotransmitter secretion"/>
    <property type="evidence" value="ECO:0000315"/>
    <property type="project" value="RGD"/>
</dbReference>
<dbReference type="GO" id="GO:0008217">
    <property type="term" value="P:regulation of blood pressure"/>
    <property type="evidence" value="ECO:0000266"/>
    <property type="project" value="RGD"/>
</dbReference>
<dbReference type="GO" id="GO:0051924">
    <property type="term" value="P:regulation of calcium ion transport"/>
    <property type="evidence" value="ECO:0000266"/>
    <property type="project" value="RGD"/>
</dbReference>
<dbReference type="GO" id="GO:0150037">
    <property type="term" value="P:regulation of calcium-dependent activation of synaptic vesicle fusion"/>
    <property type="evidence" value="ECO:0000314"/>
    <property type="project" value="SynGO"/>
</dbReference>
<dbReference type="GO" id="GO:0008016">
    <property type="term" value="P:regulation of heart contraction"/>
    <property type="evidence" value="ECO:0000266"/>
    <property type="project" value="RGD"/>
</dbReference>
<dbReference type="GO" id="GO:1904645">
    <property type="term" value="P:response to amyloid-beta"/>
    <property type="evidence" value="ECO:0000266"/>
    <property type="project" value="RGD"/>
</dbReference>
<dbReference type="GO" id="GO:0045471">
    <property type="term" value="P:response to ethanol"/>
    <property type="evidence" value="ECO:0000270"/>
    <property type="project" value="RGD"/>
</dbReference>
<dbReference type="GO" id="GO:0048265">
    <property type="term" value="P:response to pain"/>
    <property type="evidence" value="ECO:0000266"/>
    <property type="project" value="RGD"/>
</dbReference>
<dbReference type="GO" id="GO:1904627">
    <property type="term" value="P:response to phorbol 13-acetate 12-myristate"/>
    <property type="evidence" value="ECO:0000314"/>
    <property type="project" value="RGD"/>
</dbReference>
<dbReference type="GO" id="GO:0033574">
    <property type="term" value="P:response to testosterone"/>
    <property type="evidence" value="ECO:0000315"/>
    <property type="project" value="RGD"/>
</dbReference>
<dbReference type="FunFam" id="1.20.120.350:FF:000001">
    <property type="entry name" value="Voltage-dependent L-type calcium channel subunit alpha"/>
    <property type="match status" value="1"/>
</dbReference>
<dbReference type="FunFam" id="1.10.238.10:FF:000063">
    <property type="entry name" value="Voltage-dependent N-type calcium channel subunit alpha"/>
    <property type="match status" value="1"/>
</dbReference>
<dbReference type="FunFam" id="1.20.120.350:FF:000011">
    <property type="entry name" value="Voltage-dependent N-type calcium channel subunit alpha"/>
    <property type="match status" value="1"/>
</dbReference>
<dbReference type="FunFam" id="1.20.120.350:FF:000013">
    <property type="entry name" value="Voltage-dependent N-type calcium channel subunit alpha"/>
    <property type="match status" value="1"/>
</dbReference>
<dbReference type="FunFam" id="1.20.120.350:FF:000015">
    <property type="entry name" value="Voltage-dependent N-type calcium channel subunit alpha"/>
    <property type="match status" value="1"/>
</dbReference>
<dbReference type="FunFam" id="1.10.287.70:FF:000023">
    <property type="entry name" value="Voltage-dependent R-type calcium channel subunit alpha"/>
    <property type="match status" value="1"/>
</dbReference>
<dbReference type="FunFam" id="1.10.287.70:FF:000025">
    <property type="entry name" value="Voltage-dependent R-type calcium channel subunit alpha"/>
    <property type="match status" value="1"/>
</dbReference>
<dbReference type="Gene3D" id="1.10.287.70">
    <property type="match status" value="4"/>
</dbReference>
<dbReference type="Gene3D" id="6.10.250.2180">
    <property type="match status" value="1"/>
</dbReference>
<dbReference type="Gene3D" id="6.10.250.2500">
    <property type="match status" value="1"/>
</dbReference>
<dbReference type="Gene3D" id="1.20.120.350">
    <property type="entry name" value="Voltage-gated potassium channels. Chain C"/>
    <property type="match status" value="4"/>
</dbReference>
<dbReference type="InterPro" id="IPR002048">
    <property type="entry name" value="EF_hand_dom"/>
</dbReference>
<dbReference type="InterPro" id="IPR031649">
    <property type="entry name" value="GPHH_dom"/>
</dbReference>
<dbReference type="InterPro" id="IPR005821">
    <property type="entry name" value="Ion_trans_dom"/>
</dbReference>
<dbReference type="InterPro" id="IPR014873">
    <property type="entry name" value="VDCC_a1su_IQ"/>
</dbReference>
<dbReference type="InterPro" id="IPR050599">
    <property type="entry name" value="VDCC_alpha-1_subunit"/>
</dbReference>
<dbReference type="InterPro" id="IPR005447">
    <property type="entry name" value="VDCC_N_a1su"/>
</dbReference>
<dbReference type="InterPro" id="IPR002077">
    <property type="entry name" value="VDCCAlpha1"/>
</dbReference>
<dbReference type="InterPro" id="IPR027359">
    <property type="entry name" value="Volt_channel_dom_sf"/>
</dbReference>
<dbReference type="PANTHER" id="PTHR45628">
    <property type="entry name" value="VOLTAGE-DEPENDENT CALCIUM CHANNEL TYPE A SUBUNIT ALPHA-1"/>
    <property type="match status" value="1"/>
</dbReference>
<dbReference type="PANTHER" id="PTHR45628:SF6">
    <property type="entry name" value="VOLTAGE-DEPENDENT N-TYPE CALCIUM CHANNEL SUBUNIT ALPHA-1B"/>
    <property type="match status" value="1"/>
</dbReference>
<dbReference type="Pfam" id="PF08763">
    <property type="entry name" value="Ca_chan_IQ"/>
    <property type="match status" value="1"/>
</dbReference>
<dbReference type="Pfam" id="PF16905">
    <property type="entry name" value="GPHH"/>
    <property type="match status" value="1"/>
</dbReference>
<dbReference type="Pfam" id="PF00520">
    <property type="entry name" value="Ion_trans"/>
    <property type="match status" value="4"/>
</dbReference>
<dbReference type="PRINTS" id="PR00167">
    <property type="entry name" value="CACHANNEL"/>
</dbReference>
<dbReference type="PRINTS" id="PR01631">
    <property type="entry name" value="NVDCCALPHA1"/>
</dbReference>
<dbReference type="SMART" id="SM01062">
    <property type="entry name" value="Ca_chan_IQ"/>
    <property type="match status" value="1"/>
</dbReference>
<dbReference type="SUPFAM" id="SSF81324">
    <property type="entry name" value="Voltage-gated potassium channels"/>
    <property type="match status" value="4"/>
</dbReference>
<dbReference type="PROSITE" id="PS50222">
    <property type="entry name" value="EF_HAND_2"/>
    <property type="match status" value="1"/>
</dbReference>
<feature type="chain" id="PRO_0000053924" description="Voltage-dependent N-type calcium channel subunit alpha-1B">
    <location>
        <begin position="1"/>
        <end position="2336"/>
    </location>
</feature>
<feature type="topological domain" description="Cytoplasmic" evidence="3">
    <location>
        <begin position="1"/>
        <end position="90"/>
    </location>
</feature>
<feature type="transmembrane region" description="Helical; Name=S1 of repeat I" evidence="3">
    <location>
        <begin position="91"/>
        <end position="114"/>
    </location>
</feature>
<feature type="topological domain" description="Extracellular" evidence="3">
    <location>
        <begin position="115"/>
        <end position="131"/>
    </location>
</feature>
<feature type="transmembrane region" description="Helical; Name=S2 of repeat I" evidence="3">
    <location>
        <begin position="132"/>
        <end position="152"/>
    </location>
</feature>
<feature type="topological domain" description="Cytoplasmic" evidence="3">
    <location>
        <begin position="153"/>
        <end position="163"/>
    </location>
</feature>
<feature type="transmembrane region" description="Helical; Name=S3 of repeat I" evidence="3">
    <location>
        <begin position="164"/>
        <end position="182"/>
    </location>
</feature>
<feature type="topological domain" description="Extracellular" evidence="3">
    <location>
        <begin position="183"/>
        <end position="187"/>
    </location>
</feature>
<feature type="transmembrane region" description="Helical; Name=S4 of repeat I" evidence="3">
    <location>
        <begin position="188"/>
        <end position="211"/>
    </location>
</feature>
<feature type="topological domain" description="Cytoplasmic" evidence="3">
    <location>
        <begin position="212"/>
        <end position="221"/>
    </location>
</feature>
<feature type="transmembrane region" description="Helical; Name=S5 of repeat I" evidence="3">
    <location>
        <begin position="222"/>
        <end position="244"/>
    </location>
</feature>
<feature type="topological domain" description="Extracellular" evidence="3">
    <location>
        <begin position="245"/>
        <end position="331"/>
    </location>
</feature>
<feature type="transmembrane region" description="Helical; Name=S6 of repeat I" evidence="3">
    <location>
        <begin position="332"/>
        <end position="356"/>
    </location>
</feature>
<feature type="topological domain" description="Cytoplasmic" evidence="3">
    <location>
        <begin position="357"/>
        <end position="483"/>
    </location>
</feature>
<feature type="transmembrane region" description="Helical; Name=S1 of repeat II" evidence="3">
    <location>
        <begin position="484"/>
        <end position="502"/>
    </location>
</feature>
<feature type="topological domain" description="Extracellular" evidence="3">
    <location>
        <begin position="503"/>
        <end position="512"/>
    </location>
</feature>
<feature type="transmembrane region" description="Helical; Name=S2 of repeat II" evidence="3">
    <location>
        <begin position="513"/>
        <end position="535"/>
    </location>
</feature>
<feature type="topological domain" description="Cytoplasmic" evidence="3">
    <location>
        <begin position="536"/>
        <end position="545"/>
    </location>
</feature>
<feature type="transmembrane region" description="Helical; Name=S3 of repeat II" evidence="3">
    <location>
        <begin position="546"/>
        <end position="567"/>
    </location>
</feature>
<feature type="topological domain" description="Extracellular" evidence="3">
    <location>
        <begin position="568"/>
        <end position="574"/>
    </location>
</feature>
<feature type="transmembrane region" description="Helical; Name=S4 of repeat II" evidence="3">
    <location>
        <begin position="575"/>
        <end position="587"/>
    </location>
</feature>
<feature type="topological domain" description="Cytoplasmic" evidence="3">
    <location>
        <begin position="588"/>
        <end position="605"/>
    </location>
</feature>
<feature type="transmembrane region" description="Helical; Name=S5 of repeat II" evidence="3">
    <location>
        <begin position="606"/>
        <end position="631"/>
    </location>
</feature>
<feature type="topological domain" description="Extracellular" evidence="3">
    <location>
        <begin position="632"/>
        <end position="683"/>
    </location>
</feature>
<feature type="transmembrane region" description="Helical; Name=S6 of repeat II" evidence="3">
    <location>
        <begin position="684"/>
        <end position="710"/>
    </location>
</feature>
<feature type="topological domain" description="Cytoplasmic" evidence="3">
    <location>
        <begin position="711"/>
        <end position="1149"/>
    </location>
</feature>
<feature type="transmembrane region" description="Helical; Name=S1 of repeat III" evidence="3">
    <location>
        <begin position="1150"/>
        <end position="1168"/>
    </location>
</feature>
<feature type="topological domain" description="Extracellular" evidence="3">
    <location>
        <begin position="1169"/>
        <end position="1176"/>
    </location>
</feature>
<feature type="transmembrane region" description="Helical; Name=S2 of repeat III" evidence="3">
    <location>
        <begin position="1177"/>
        <end position="1201"/>
    </location>
</feature>
<feature type="topological domain" description="Cytoplasmic" evidence="3">
    <location>
        <begin position="1202"/>
        <end position="1215"/>
    </location>
</feature>
<feature type="transmembrane region" description="Helical; Name=S3 of repeat III" evidence="3">
    <location>
        <begin position="1216"/>
        <end position="1240"/>
    </location>
</feature>
<feature type="topological domain" description="Extracellular" evidence="3">
    <location>
        <begin position="1241"/>
        <end position="1246"/>
    </location>
</feature>
<feature type="transmembrane region" description="Helical; Name=S4 of repeat III" evidence="3">
    <location>
        <begin position="1247"/>
        <end position="1267"/>
    </location>
</feature>
<feature type="topological domain" description="Cytoplasmic" evidence="3">
    <location>
        <begin position="1268"/>
        <end position="1285"/>
    </location>
</feature>
<feature type="transmembrane region" description="Helical; Name=S5 of repeat III" evidence="3">
    <location>
        <begin position="1286"/>
        <end position="1305"/>
    </location>
</feature>
<feature type="topological domain" description="Extracellular" evidence="3">
    <location>
        <begin position="1306"/>
        <end position="1392"/>
    </location>
</feature>
<feature type="transmembrane region" description="Helical; Name=S6 of repeat III" evidence="3">
    <location>
        <begin position="1393"/>
        <end position="1418"/>
    </location>
</feature>
<feature type="topological domain" description="Cytoplasmic" evidence="3">
    <location>
        <begin position="1419"/>
        <end position="1473"/>
    </location>
</feature>
<feature type="transmembrane region" description="Helical; Name=S1 of repeat IV" evidence="3">
    <location>
        <begin position="1474"/>
        <end position="1492"/>
    </location>
</feature>
<feature type="topological domain" description="Extracellular" evidence="3">
    <location>
        <begin position="1493"/>
        <end position="1500"/>
    </location>
</feature>
<feature type="transmembrane region" description="Helical; Name=S2 of repeat IV" evidence="3">
    <location>
        <begin position="1501"/>
        <end position="1525"/>
    </location>
</feature>
<feature type="topological domain" description="Cytoplasmic" evidence="3">
    <location>
        <begin position="1526"/>
        <end position="1535"/>
    </location>
</feature>
<feature type="transmembrane region" description="Helical; Name=S3 of repeat IV" evidence="3">
    <location>
        <begin position="1536"/>
        <end position="1557"/>
    </location>
</feature>
<feature type="topological domain" description="Extracellular" evidence="3">
    <location>
        <begin position="1558"/>
        <end position="1563"/>
    </location>
</feature>
<feature type="transmembrane region" description="Helical; Name=S4 of repeat IV" evidence="3">
    <location>
        <begin position="1564"/>
        <end position="1582"/>
    </location>
</feature>
<feature type="topological domain" description="Cytoplasmic" evidence="3">
    <location>
        <begin position="1583"/>
        <end position="1601"/>
    </location>
</feature>
<feature type="transmembrane region" description="Helical; Name=S5 of repeat IV" evidence="3">
    <location>
        <begin position="1602"/>
        <end position="1621"/>
    </location>
</feature>
<feature type="topological domain" description="Extracellular" evidence="3">
    <location>
        <begin position="1622"/>
        <end position="1683"/>
    </location>
</feature>
<feature type="transmembrane region" description="Helical; Name=S6 of repeat IV" evidence="3">
    <location>
        <begin position="1684"/>
        <end position="1707"/>
    </location>
</feature>
<feature type="topological domain" description="Cytoplasmic" evidence="3">
    <location>
        <begin position="1708"/>
        <end position="2336"/>
    </location>
</feature>
<feature type="repeat" description="I">
    <location>
        <begin position="82"/>
        <end position="359"/>
    </location>
</feature>
<feature type="repeat" description="II">
    <location>
        <begin position="469"/>
        <end position="713"/>
    </location>
</feature>
<feature type="repeat" description="III">
    <location>
        <begin position="1135"/>
        <end position="1421"/>
    </location>
</feature>
<feature type="repeat" description="IV">
    <location>
        <begin position="1458"/>
        <end position="1711"/>
    </location>
</feature>
<feature type="domain" description="EF-hand" evidence="5">
    <location>
        <begin position="1724"/>
        <end position="1759"/>
    </location>
</feature>
<feature type="region of interest" description="Disordered" evidence="6">
    <location>
        <begin position="1"/>
        <end position="37"/>
    </location>
</feature>
<feature type="region of interest" description="Binding to the beta subunit">
    <location>
        <begin position="379"/>
        <end position="396"/>
    </location>
</feature>
<feature type="region of interest" description="Disordered" evidence="6">
    <location>
        <begin position="800"/>
        <end position="1021"/>
    </location>
</feature>
<feature type="region of interest" description="Disordered" evidence="6">
    <location>
        <begin position="1051"/>
        <end position="1076"/>
    </location>
</feature>
<feature type="region of interest" description="Disordered" evidence="6">
    <location>
        <begin position="1981"/>
        <end position="2202"/>
    </location>
</feature>
<feature type="compositionally biased region" description="Gly residues" evidence="6">
    <location>
        <begin position="10"/>
        <end position="37"/>
    </location>
</feature>
<feature type="compositionally biased region" description="Basic and acidic residues" evidence="6">
    <location>
        <begin position="806"/>
        <end position="827"/>
    </location>
</feature>
<feature type="compositionally biased region" description="Basic and acidic residues" evidence="6">
    <location>
        <begin position="870"/>
        <end position="891"/>
    </location>
</feature>
<feature type="compositionally biased region" description="Basic and acidic residues" evidence="6">
    <location>
        <begin position="920"/>
        <end position="930"/>
    </location>
</feature>
<feature type="compositionally biased region" description="Basic and acidic residues" evidence="6">
    <location>
        <begin position="938"/>
        <end position="948"/>
    </location>
</feature>
<feature type="compositionally biased region" description="Basic and acidic residues" evidence="6">
    <location>
        <begin position="970"/>
        <end position="981"/>
    </location>
</feature>
<feature type="compositionally biased region" description="Basic and acidic residues" evidence="6">
    <location>
        <begin position="996"/>
        <end position="1021"/>
    </location>
</feature>
<feature type="compositionally biased region" description="Polar residues" evidence="6">
    <location>
        <begin position="1059"/>
        <end position="1076"/>
    </location>
</feature>
<feature type="compositionally biased region" description="Basic residues" evidence="6">
    <location>
        <begin position="2048"/>
        <end position="2062"/>
    </location>
</feature>
<feature type="compositionally biased region" description="Basic and acidic residues" evidence="6">
    <location>
        <begin position="2097"/>
        <end position="2113"/>
    </location>
</feature>
<feature type="compositionally biased region" description="Polar residues" evidence="6">
    <location>
        <begin position="2161"/>
        <end position="2177"/>
    </location>
</feature>
<feature type="binding site" evidence="4">
    <location>
        <begin position="452"/>
        <end position="459"/>
    </location>
    <ligand>
        <name>ATP</name>
        <dbReference type="ChEBI" id="CHEBI:30616"/>
    </ligand>
</feature>
<feature type="binding site" evidence="3">
    <location>
        <position position="545"/>
    </location>
    <ligand>
        <name>a 1,2-diacyl-sn-glycero-3-phospho-(1D-myo-inositol-4,5-bisphosphate)</name>
        <dbReference type="ChEBI" id="CHEBI:58456"/>
    </ligand>
</feature>
<feature type="binding site" evidence="3">
    <location>
        <position position="585"/>
    </location>
    <ligand>
        <name>a 1,2-diacyl-sn-glycero-3-phospho-(1D-myo-inositol-4,5-bisphosphate)</name>
        <dbReference type="ChEBI" id="CHEBI:58456"/>
    </ligand>
</feature>
<feature type="binding site" evidence="3">
    <location>
        <position position="588"/>
    </location>
    <ligand>
        <name>a 1,2-diacyl-sn-glycero-3-phospho-(1D-myo-inositol-4,5-bisphosphate)</name>
        <dbReference type="ChEBI" id="CHEBI:58456"/>
    </ligand>
</feature>
<feature type="binding site" evidence="11">
    <location>
        <position position="1737"/>
    </location>
    <ligand>
        <name>Ca(2+)</name>
        <dbReference type="ChEBI" id="CHEBI:29108"/>
    </ligand>
</feature>
<feature type="binding site" evidence="11">
    <location>
        <position position="1743"/>
    </location>
    <ligand>
        <name>Ca(2+)</name>
        <dbReference type="ChEBI" id="CHEBI:29108"/>
    </ligand>
</feature>
<feature type="binding site" evidence="11">
    <location>
        <position position="1748"/>
    </location>
    <ligand>
        <name>Ca(2+)</name>
        <dbReference type="ChEBI" id="CHEBI:29108"/>
    </ligand>
</feature>
<feature type="site" description="Calcium ion selectivity and permeability" evidence="2">
    <location>
        <position position="314"/>
    </location>
</feature>
<feature type="site" description="Calcium ion selectivity and permeability" evidence="2">
    <location>
        <position position="664"/>
    </location>
</feature>
<feature type="site" description="Calcium ion selectivity and permeability" evidence="2">
    <location>
        <position position="1367"/>
    </location>
</feature>
<feature type="site" description="Calcium ion selectivity and permeability" evidence="2">
    <location>
        <position position="1655"/>
    </location>
</feature>
<feature type="modified residue" description="Omega-N-methylarginine" evidence="1">
    <location>
        <position position="22"/>
    </location>
</feature>
<feature type="modified residue" description="Phosphoserine" evidence="13">
    <location>
        <position position="411"/>
    </location>
</feature>
<feature type="modified residue" description="Phosphoserine" evidence="13">
    <location>
        <position position="746"/>
    </location>
</feature>
<feature type="modified residue" description="Phosphoserine" evidence="1">
    <location>
        <position position="749"/>
    </location>
</feature>
<feature type="modified residue" description="Phosphoserine" evidence="1">
    <location>
        <position position="784"/>
    </location>
</feature>
<feature type="modified residue" description="Phosphoserine" evidence="1">
    <location>
        <position position="1067"/>
    </location>
</feature>
<feature type="modified residue" description="Phosphoserine" evidence="1">
    <location>
        <position position="2065"/>
    </location>
</feature>
<feature type="modified residue" description="Phosphoserine" evidence="1">
    <location>
        <position position="2221"/>
    </location>
</feature>
<feature type="modified residue" description="Phosphoserine" evidence="1">
    <location>
        <position position="2230"/>
    </location>
</feature>
<feature type="modified residue" description="Phosphoserine" evidence="13">
    <location>
        <position position="2253"/>
    </location>
</feature>
<feature type="glycosylation site" description="N-linked (GlcNAc...) asparagine" evidence="3">
    <location>
        <position position="256"/>
    </location>
</feature>
<feature type="glycosylation site" description="N-linked (GlcNAc...) asparagine" evidence="4">
    <location>
        <position position="1563"/>
    </location>
</feature>
<feature type="glycosylation site" description="N-linked (GlcNAc...) asparagine" evidence="4">
    <location>
        <position position="1675"/>
    </location>
</feature>
<feature type="sequence conflict" description="In Ref. 2; no nucleotide entry." evidence="11" ref="2">
    <original>N</original>
    <variation>D</variation>
    <location>
        <position position="1538"/>
    </location>
</feature>
<feature type="sequence conflict" description="In Ref. 2; no nucleotide entry." evidence="11" ref="2">
    <original>C</original>
    <variation>L</variation>
    <location>
        <position position="1579"/>
    </location>
</feature>
<feature type="helix" evidence="14">
    <location>
        <begin position="364"/>
        <end position="403"/>
    </location>
</feature>
<sequence length="2336" mass="262256">MVRFGDELGGRYGGTGGGERARGGGAGGAGGPGQGGLPPGQRVLYKQSIAQRARTMALYNPIPVKQNCFTVNRSLFVFSEDNVVRKYAKRITEWPPFEYMILATIIANCIVLALEQHLPDGDKTPMSERLDDTEPYFIGIFCFEAGIKIIALGFVFHKGSYLRNGWNVMDFVVVLTEILATAGTDFDLRTLRAVRVLRPLKLVSGIPSLQVVLKSIMKAMVPLLQIGLLLFFAILMFAIIGLEFYMGKFHKACFPNSTDAEPVGDFPCGKEAPARLCDSDTECREYWPGPNFGITNFDNILFAILTVFQCITMEGWTDILYNTNDAAGNTWNWLYFIPLIIIGSFFMLNLVLGVLSGEFAKERERVENRRAFLKLRRQQQIERELNGYLEWIFKAEEVMLAEEDKNAEEKSPLDAVLKRAATKKSRNDLIHAEEGEDRFVDLCAAGSPFARASLKSGKTESSSYFRRKEKMFRFLIRRMVKAQSFYWVVLCVVALNTLCVAMVHYNQPQRLTTALYFAEFVFLGLFLTEMSLKMYGLGPRSYFRSSFNCFDFGVIVGSIFEVVWAAIKPGTSFGISVLRALRLLRIFKVTKYWNSLRNLVVSLLNSMKSIISLLFLLFLFIVVFALLGMQLFGGQFNFQDETPTTNFDTFPAAILTVFQILTGEDWNAVMYHGIESQGGVSKGMFSSFYFIVLTLFGNYTLLNVFLAIAVDNLANAQELTKDEEEMEEAANQKLALQKAKEVAEVSPMSAANISIAARQQNSAKARSVWEQRASQLRLQNLRASCEALYSEMDPEERLRYASTRHVRPDMKTHMDRPLVVEPGRDGLRGPAGNKSKPEGTEATEGADPPRRHHRHRDRDKTSASTPAGGEQDRTDCPKAESTETGAREERARPRRSHSKEAPGADTQVRCERSRRHHRRGSPEEATEREPRRHRAHRHAQDSSKEGKEGTAPVLVPKGERRARHRGPRTGPRETENSEEPTRRHRAKHKVPPTLEPPEREVAEKESNVVEGDKETRNHQPKEPRCDLEAIAVTGVGSLHMLPSTCLQKVDEQPEDADNQRNVTRMGSQPSDPSTTVHVPVTLTGPPGEATVVPSANTDLEGQAEGKKEAEADDVLRRGPRPIVPYSSMFCLSPTNLLRRFCHYIVTMRYFEMVILVVIALSSIALAAEDPVRTDSFRNNALKYMDYIFTGVFTFEMVIKMIDLGLLLHPGAYFRDLWNILDFIVVSGALVAFAFSSFMGGSKGKDINTIKSLRVLRVLRPLKTIKRLPKLKAVFDCVVNSLKNVLNILIVYMLFMFIFAVIAVQLFKGKFFYCTDESKELERDCRGQYLDYEKEEVEAQPRQWKKYDFHYDNVLWALLTLFTVSTGEGWPMVLKHSVDATYEEQGPSPGFRMELSIFYVVYFVVFPFFFVNIFVALIIITFQEQGDKVMSECSLEKNERACIDFAISAKPLTRYMPQNKQSFQYKTWTFVVSPPFEYFIMAMIALNTVVLMMKFYDAPYEYELMLKCLNIVFTSMFSLECILKIIAFGVLNYFRDAWNVFDFVTVLGSITDILVTEIANNFINLSFLRLFRAARLIKLCRQGYTIRILLWTFVQSFKALPYVCLLIAMLFFIYAIIGMQVFGNIALDDGTSINRHNNFRTFLQALMLLFRSATGEAWHEIMLSCLGNRACDPHANASECGSDFAYFYFVSFIFLCSFLMLNLFVAVIMDNFEYLTRDSSILGPHHLDEFIRVWAEYDPAACGRISYNDMFEMLKHMSPPLGLGKKCPARVAYKRLVRMNMPISNEDMTVHFTSTLMALIRTALEIKLAPAGTKQHQCDAELRKEISSVWANLPQKTLDLLVPPHKPDEMTVGKVYAALMIFDFYKQNKTTRDQTHQAPGGLSQMGPVSLFHPLKATLEQTQPAVLRGARVFLRQKSATSLSNGGAIQTQESGIKESLSWGTQRTQDVLYEARAPLERGHSAEIPVGQPGALAVDVQMQNMTLRGPDGEPQPGLESQGRAASMPRLAAETQPAPNASPMKRSISTLAPRPHGTQLCNTVLDRPPPSQVSHHHHHRCHRRRDKKQRSLEKGPSLSVDTEGAPSTAAGSGLPHGEGSTGCRRERKQERGRSQERRQPSSSSSEKQRFYSCDRFGSREPPQPKPSLSSHPISPTAALEPGPHPQGSGSVNGSPLMSTSGASTPGRGGRRQLPQTPLTPRPSITYKTANSSPVHFAEGQSGLPAFSPGRLSRGLSEHNALLQKEPLSQPLASGSRIGSDPYLGQRLDSEASAHNLPEDTLTFEEAVATNSGRSSRTSYVSSLTSQSHPLRRVPNGYHCTLGLSTGVRARHSYHHPDQDHWC</sequence>
<gene>
    <name type="primary">Cacna1b</name>
    <name type="synonym">Cach5</name>
    <name type="synonym">Cacnl1a5</name>
</gene>
<proteinExistence type="evidence at protein level"/>
<evidence type="ECO:0000250" key="1">
    <source>
        <dbReference type="UniProtKB" id="O55017"/>
    </source>
</evidence>
<evidence type="ECO:0000250" key="2">
    <source>
        <dbReference type="UniProtKB" id="P15381"/>
    </source>
</evidence>
<evidence type="ECO:0000250" key="3">
    <source>
        <dbReference type="UniProtKB" id="Q00975"/>
    </source>
</evidence>
<evidence type="ECO:0000255" key="4"/>
<evidence type="ECO:0000255" key="5">
    <source>
        <dbReference type="PROSITE-ProRule" id="PRU00448"/>
    </source>
</evidence>
<evidence type="ECO:0000256" key="6">
    <source>
        <dbReference type="SAM" id="MobiDB-lite"/>
    </source>
</evidence>
<evidence type="ECO:0000269" key="7">
    <source>
    </source>
</evidence>
<evidence type="ECO:0000269" key="8">
    <source>
    </source>
</evidence>
<evidence type="ECO:0000269" key="9">
    <source>
    </source>
</evidence>
<evidence type="ECO:0000269" key="10">
    <source>
    </source>
</evidence>
<evidence type="ECO:0000305" key="11"/>
<evidence type="ECO:0000305" key="12">
    <source>
    </source>
</evidence>
<evidence type="ECO:0007744" key="13">
    <source>
    </source>
</evidence>
<evidence type="ECO:0007829" key="14">
    <source>
        <dbReference type="PDB" id="4DEX"/>
    </source>
</evidence>